<protein>
    <recommendedName>
        <fullName evidence="1">ATP synthase subunit alpha</fullName>
        <ecNumber evidence="1">7.1.2.2</ecNumber>
    </recommendedName>
    <alternativeName>
        <fullName evidence="1">ATP synthase F1 sector subunit alpha</fullName>
    </alternativeName>
    <alternativeName>
        <fullName evidence="1">F-ATPase subunit alpha</fullName>
    </alternativeName>
</protein>
<name>ATPA_ECOHS</name>
<sequence>MQLNSTEISELIKQRIAQFNVVSEAHNEGTIVSVSDGVIRIHGLADCMQGEMISLPGNRYAIALNLERDSVGAVVMGPYADLAEGMKVKCTGRILEVPVGRGLLGRVVNTLGAPIDGKGPLDHDGFSAVEAIAPGVIERQSVDQPVQTGYKAVDSMIPIGRGQRELIIGDRQTGKTALAIDAIINQRDSGIKCIYVAIGQKASTISNVVRKLEEHGALANTIVVVATASESAALQYLAPYAGCAMGEYFRDRGEDALIIYDDLSKQAVAYRQISLLLRRPPGREAFPGDVFYLHSRLLERAARVNAEYVEAFTKGEVKGKTGSLTALPIIETQAGDVSAFVPTNVISITDGQIFLETNLFNAGIRPAVNPGISVSRVGGAAQTKIMKKLSGGIRTALAQYRELAAFSQFASDLDDATRKQLDHGQKVTELLKQKQYAPMSVAQQSLVLFAAERGYLADVELSKIGSFEAALLAYVDRDHAPLMQEINQTGGYNDEIEGKLKGILDSFKATQSW</sequence>
<evidence type="ECO:0000255" key="1">
    <source>
        <dbReference type="HAMAP-Rule" id="MF_01346"/>
    </source>
</evidence>
<feature type="chain" id="PRO_1000067712" description="ATP synthase subunit alpha">
    <location>
        <begin position="1"/>
        <end position="513"/>
    </location>
</feature>
<feature type="binding site" evidence="1">
    <location>
        <begin position="169"/>
        <end position="176"/>
    </location>
    <ligand>
        <name>ATP</name>
        <dbReference type="ChEBI" id="CHEBI:30616"/>
    </ligand>
</feature>
<feature type="site" description="Required for activity" evidence="1">
    <location>
        <position position="373"/>
    </location>
</feature>
<organism>
    <name type="scientific">Escherichia coli O9:H4 (strain HS)</name>
    <dbReference type="NCBI Taxonomy" id="331112"/>
    <lineage>
        <taxon>Bacteria</taxon>
        <taxon>Pseudomonadati</taxon>
        <taxon>Pseudomonadota</taxon>
        <taxon>Gammaproteobacteria</taxon>
        <taxon>Enterobacterales</taxon>
        <taxon>Enterobacteriaceae</taxon>
        <taxon>Escherichia</taxon>
    </lineage>
</organism>
<comment type="function">
    <text evidence="1">Produces ATP from ADP in the presence of a proton gradient across the membrane. The alpha chain is a regulatory subunit.</text>
</comment>
<comment type="catalytic activity">
    <reaction evidence="1">
        <text>ATP + H2O + 4 H(+)(in) = ADP + phosphate + 5 H(+)(out)</text>
        <dbReference type="Rhea" id="RHEA:57720"/>
        <dbReference type="ChEBI" id="CHEBI:15377"/>
        <dbReference type="ChEBI" id="CHEBI:15378"/>
        <dbReference type="ChEBI" id="CHEBI:30616"/>
        <dbReference type="ChEBI" id="CHEBI:43474"/>
        <dbReference type="ChEBI" id="CHEBI:456216"/>
        <dbReference type="EC" id="7.1.2.2"/>
    </reaction>
</comment>
<comment type="subunit">
    <text evidence="1">F-type ATPases have 2 components, CF(1) - the catalytic core - and CF(0) - the membrane proton channel. CF(1) has five subunits: alpha(3), beta(3), gamma(1), delta(1), epsilon(1). CF(0) has three main subunits: a(1), b(2) and c(9-12). The alpha and beta chains form an alternating ring which encloses part of the gamma chain. CF(1) is attached to CF(0) by a central stalk formed by the gamma and epsilon chains, while a peripheral stalk is formed by the delta and b chains.</text>
</comment>
<comment type="subcellular location">
    <subcellularLocation>
        <location evidence="1">Cell inner membrane</location>
        <topology evidence="1">Peripheral membrane protein</topology>
    </subcellularLocation>
</comment>
<comment type="similarity">
    <text evidence="1">Belongs to the ATPase alpha/beta chains family.</text>
</comment>
<dbReference type="EC" id="7.1.2.2" evidence="1"/>
<dbReference type="EMBL" id="CP000802">
    <property type="protein sequence ID" value="ABV08151.1"/>
    <property type="molecule type" value="Genomic_DNA"/>
</dbReference>
<dbReference type="RefSeq" id="WP_001176745.1">
    <property type="nucleotide sequence ID" value="NC_009800.1"/>
</dbReference>
<dbReference type="SMR" id="A8A6J7"/>
<dbReference type="GeneID" id="93778233"/>
<dbReference type="KEGG" id="ecx:EcHS_A3950"/>
<dbReference type="HOGENOM" id="CLU_010091_2_1_6"/>
<dbReference type="GO" id="GO:0005886">
    <property type="term" value="C:plasma membrane"/>
    <property type="evidence" value="ECO:0007669"/>
    <property type="project" value="UniProtKB-SubCell"/>
</dbReference>
<dbReference type="GO" id="GO:0045259">
    <property type="term" value="C:proton-transporting ATP synthase complex"/>
    <property type="evidence" value="ECO:0007669"/>
    <property type="project" value="UniProtKB-KW"/>
</dbReference>
<dbReference type="GO" id="GO:0043531">
    <property type="term" value="F:ADP binding"/>
    <property type="evidence" value="ECO:0007669"/>
    <property type="project" value="TreeGrafter"/>
</dbReference>
<dbReference type="GO" id="GO:0005524">
    <property type="term" value="F:ATP binding"/>
    <property type="evidence" value="ECO:0007669"/>
    <property type="project" value="UniProtKB-UniRule"/>
</dbReference>
<dbReference type="GO" id="GO:0046933">
    <property type="term" value="F:proton-transporting ATP synthase activity, rotational mechanism"/>
    <property type="evidence" value="ECO:0007669"/>
    <property type="project" value="UniProtKB-UniRule"/>
</dbReference>
<dbReference type="CDD" id="cd18113">
    <property type="entry name" value="ATP-synt_F1_alpha_C"/>
    <property type="match status" value="1"/>
</dbReference>
<dbReference type="CDD" id="cd18116">
    <property type="entry name" value="ATP-synt_F1_alpha_N"/>
    <property type="match status" value="1"/>
</dbReference>
<dbReference type="CDD" id="cd01132">
    <property type="entry name" value="F1-ATPase_alpha_CD"/>
    <property type="match status" value="1"/>
</dbReference>
<dbReference type="FunFam" id="1.20.150.20:FF:000001">
    <property type="entry name" value="ATP synthase subunit alpha"/>
    <property type="match status" value="1"/>
</dbReference>
<dbReference type="FunFam" id="2.40.30.20:FF:000001">
    <property type="entry name" value="ATP synthase subunit alpha"/>
    <property type="match status" value="1"/>
</dbReference>
<dbReference type="FunFam" id="3.40.50.300:FF:000002">
    <property type="entry name" value="ATP synthase subunit alpha"/>
    <property type="match status" value="1"/>
</dbReference>
<dbReference type="Gene3D" id="2.40.30.20">
    <property type="match status" value="1"/>
</dbReference>
<dbReference type="Gene3D" id="1.20.150.20">
    <property type="entry name" value="ATP synthase alpha/beta chain, C-terminal domain"/>
    <property type="match status" value="1"/>
</dbReference>
<dbReference type="Gene3D" id="3.40.50.300">
    <property type="entry name" value="P-loop containing nucleotide triphosphate hydrolases"/>
    <property type="match status" value="1"/>
</dbReference>
<dbReference type="HAMAP" id="MF_01346">
    <property type="entry name" value="ATP_synth_alpha_bact"/>
    <property type="match status" value="1"/>
</dbReference>
<dbReference type="InterPro" id="IPR023366">
    <property type="entry name" value="ATP_synth_asu-like_sf"/>
</dbReference>
<dbReference type="InterPro" id="IPR000793">
    <property type="entry name" value="ATP_synth_asu_C"/>
</dbReference>
<dbReference type="InterPro" id="IPR038376">
    <property type="entry name" value="ATP_synth_asu_C_sf"/>
</dbReference>
<dbReference type="InterPro" id="IPR033732">
    <property type="entry name" value="ATP_synth_F1_a_nt-bd_dom"/>
</dbReference>
<dbReference type="InterPro" id="IPR005294">
    <property type="entry name" value="ATP_synth_F1_asu"/>
</dbReference>
<dbReference type="InterPro" id="IPR020003">
    <property type="entry name" value="ATPase_a/bsu_AS"/>
</dbReference>
<dbReference type="InterPro" id="IPR004100">
    <property type="entry name" value="ATPase_F1/V1/A1_a/bsu_N"/>
</dbReference>
<dbReference type="InterPro" id="IPR036121">
    <property type="entry name" value="ATPase_F1/V1/A1_a/bsu_N_sf"/>
</dbReference>
<dbReference type="InterPro" id="IPR000194">
    <property type="entry name" value="ATPase_F1/V1/A1_a/bsu_nucl-bd"/>
</dbReference>
<dbReference type="InterPro" id="IPR027417">
    <property type="entry name" value="P-loop_NTPase"/>
</dbReference>
<dbReference type="NCBIfam" id="TIGR00962">
    <property type="entry name" value="atpA"/>
    <property type="match status" value="1"/>
</dbReference>
<dbReference type="NCBIfam" id="NF009884">
    <property type="entry name" value="PRK13343.1"/>
    <property type="match status" value="1"/>
</dbReference>
<dbReference type="PANTHER" id="PTHR48082">
    <property type="entry name" value="ATP SYNTHASE SUBUNIT ALPHA, MITOCHONDRIAL"/>
    <property type="match status" value="1"/>
</dbReference>
<dbReference type="PANTHER" id="PTHR48082:SF2">
    <property type="entry name" value="ATP SYNTHASE SUBUNIT ALPHA, MITOCHONDRIAL"/>
    <property type="match status" value="1"/>
</dbReference>
<dbReference type="Pfam" id="PF00006">
    <property type="entry name" value="ATP-synt_ab"/>
    <property type="match status" value="1"/>
</dbReference>
<dbReference type="Pfam" id="PF00306">
    <property type="entry name" value="ATP-synt_ab_C"/>
    <property type="match status" value="1"/>
</dbReference>
<dbReference type="Pfam" id="PF02874">
    <property type="entry name" value="ATP-synt_ab_N"/>
    <property type="match status" value="1"/>
</dbReference>
<dbReference type="SUPFAM" id="SSF47917">
    <property type="entry name" value="C-terminal domain of alpha and beta subunits of F1 ATP synthase"/>
    <property type="match status" value="1"/>
</dbReference>
<dbReference type="SUPFAM" id="SSF50615">
    <property type="entry name" value="N-terminal domain of alpha and beta subunits of F1 ATP synthase"/>
    <property type="match status" value="1"/>
</dbReference>
<dbReference type="SUPFAM" id="SSF52540">
    <property type="entry name" value="P-loop containing nucleoside triphosphate hydrolases"/>
    <property type="match status" value="1"/>
</dbReference>
<dbReference type="PROSITE" id="PS00152">
    <property type="entry name" value="ATPASE_ALPHA_BETA"/>
    <property type="match status" value="1"/>
</dbReference>
<keyword id="KW-0066">ATP synthesis</keyword>
<keyword id="KW-0067">ATP-binding</keyword>
<keyword id="KW-0997">Cell inner membrane</keyword>
<keyword id="KW-1003">Cell membrane</keyword>
<keyword id="KW-0139">CF(1)</keyword>
<keyword id="KW-0375">Hydrogen ion transport</keyword>
<keyword id="KW-0406">Ion transport</keyword>
<keyword id="KW-0472">Membrane</keyword>
<keyword id="KW-0547">Nucleotide-binding</keyword>
<keyword id="KW-1278">Translocase</keyword>
<keyword id="KW-0813">Transport</keyword>
<reference key="1">
    <citation type="journal article" date="2008" name="J. Bacteriol.">
        <title>The pangenome structure of Escherichia coli: comparative genomic analysis of E. coli commensal and pathogenic isolates.</title>
        <authorList>
            <person name="Rasko D.A."/>
            <person name="Rosovitz M.J."/>
            <person name="Myers G.S.A."/>
            <person name="Mongodin E.F."/>
            <person name="Fricke W.F."/>
            <person name="Gajer P."/>
            <person name="Crabtree J."/>
            <person name="Sebaihia M."/>
            <person name="Thomson N.R."/>
            <person name="Chaudhuri R."/>
            <person name="Henderson I.R."/>
            <person name="Sperandio V."/>
            <person name="Ravel J."/>
        </authorList>
    </citation>
    <scope>NUCLEOTIDE SEQUENCE [LARGE SCALE GENOMIC DNA]</scope>
    <source>
        <strain>HS</strain>
    </source>
</reference>
<proteinExistence type="inferred from homology"/>
<gene>
    <name evidence="1" type="primary">atpA</name>
    <name type="ordered locus">EcHS_A3950</name>
</gene>
<accession>A8A6J7</accession>